<dbReference type="EC" id="1.2.1.27" evidence="1"/>
<dbReference type="EMBL" id="AP006627">
    <property type="protein sequence ID" value="BAD62964.1"/>
    <property type="molecule type" value="Genomic_DNA"/>
</dbReference>
<dbReference type="SMR" id="Q5WKZ1"/>
<dbReference type="STRING" id="66692.ABC0422"/>
<dbReference type="KEGG" id="bcl:ABC0422"/>
<dbReference type="eggNOG" id="COG1012">
    <property type="taxonomic scope" value="Bacteria"/>
</dbReference>
<dbReference type="HOGENOM" id="CLU_005391_1_10_9"/>
<dbReference type="OrthoDB" id="9762913at2"/>
<dbReference type="UniPathway" id="UPA00076">
    <property type="reaction ID" value="UER00148"/>
</dbReference>
<dbReference type="Proteomes" id="UP000001168">
    <property type="component" value="Chromosome"/>
</dbReference>
<dbReference type="GO" id="GO:0018478">
    <property type="term" value="F:malonate-semialdehyde dehydrogenase (acetylating) activity"/>
    <property type="evidence" value="ECO:0007669"/>
    <property type="project" value="UniProtKB-UniRule"/>
</dbReference>
<dbReference type="GO" id="GO:0004491">
    <property type="term" value="F:methylmalonate-semialdehyde dehydrogenase (acylating, NAD) activity"/>
    <property type="evidence" value="ECO:0007669"/>
    <property type="project" value="UniProtKB-UniRule"/>
</dbReference>
<dbReference type="GO" id="GO:0019310">
    <property type="term" value="P:inositol catabolic process"/>
    <property type="evidence" value="ECO:0007669"/>
    <property type="project" value="UniProtKB-UniRule"/>
</dbReference>
<dbReference type="GO" id="GO:0006210">
    <property type="term" value="P:thymine catabolic process"/>
    <property type="evidence" value="ECO:0007669"/>
    <property type="project" value="TreeGrafter"/>
</dbReference>
<dbReference type="GO" id="GO:0006574">
    <property type="term" value="P:valine catabolic process"/>
    <property type="evidence" value="ECO:0007669"/>
    <property type="project" value="TreeGrafter"/>
</dbReference>
<dbReference type="CDD" id="cd07085">
    <property type="entry name" value="ALDH_F6_MMSDH"/>
    <property type="match status" value="1"/>
</dbReference>
<dbReference type="FunFam" id="3.40.309.10:FF:000002">
    <property type="entry name" value="Methylmalonate-semialdehyde dehydrogenase (Acylating)"/>
    <property type="match status" value="1"/>
</dbReference>
<dbReference type="FunFam" id="3.40.605.10:FF:000003">
    <property type="entry name" value="Methylmalonate-semialdehyde dehydrogenase [acylating]"/>
    <property type="match status" value="1"/>
</dbReference>
<dbReference type="Gene3D" id="3.40.605.10">
    <property type="entry name" value="Aldehyde Dehydrogenase, Chain A, domain 1"/>
    <property type="match status" value="1"/>
</dbReference>
<dbReference type="Gene3D" id="3.40.309.10">
    <property type="entry name" value="Aldehyde Dehydrogenase, Chain A, domain 2"/>
    <property type="match status" value="1"/>
</dbReference>
<dbReference type="HAMAP" id="MF_01670">
    <property type="entry name" value="IolA"/>
    <property type="match status" value="1"/>
</dbReference>
<dbReference type="InterPro" id="IPR016161">
    <property type="entry name" value="Ald_DH/histidinol_DH"/>
</dbReference>
<dbReference type="InterPro" id="IPR016163">
    <property type="entry name" value="Ald_DH_C"/>
</dbReference>
<dbReference type="InterPro" id="IPR016160">
    <property type="entry name" value="Ald_DH_CS_CYS"/>
</dbReference>
<dbReference type="InterPro" id="IPR016162">
    <property type="entry name" value="Ald_DH_N"/>
</dbReference>
<dbReference type="InterPro" id="IPR015590">
    <property type="entry name" value="Aldehyde_DH_dom"/>
</dbReference>
<dbReference type="InterPro" id="IPR010061">
    <property type="entry name" value="MeMal-semiAld_DH"/>
</dbReference>
<dbReference type="InterPro" id="IPR023510">
    <property type="entry name" value="MSDH_GmP_bac"/>
</dbReference>
<dbReference type="NCBIfam" id="TIGR01722">
    <property type="entry name" value="MMSDH"/>
    <property type="match status" value="1"/>
</dbReference>
<dbReference type="PANTHER" id="PTHR43866">
    <property type="entry name" value="MALONATE-SEMIALDEHYDE DEHYDROGENASE"/>
    <property type="match status" value="1"/>
</dbReference>
<dbReference type="PANTHER" id="PTHR43866:SF4">
    <property type="entry name" value="MALONATE-SEMIALDEHYDE DEHYDROGENASE"/>
    <property type="match status" value="1"/>
</dbReference>
<dbReference type="Pfam" id="PF00171">
    <property type="entry name" value="Aldedh"/>
    <property type="match status" value="1"/>
</dbReference>
<dbReference type="SUPFAM" id="SSF53720">
    <property type="entry name" value="ALDH-like"/>
    <property type="match status" value="1"/>
</dbReference>
<dbReference type="PROSITE" id="PS00070">
    <property type="entry name" value="ALDEHYDE_DEHYDR_CYS"/>
    <property type="match status" value="1"/>
</dbReference>
<name>IOLA1_SHOC1</name>
<evidence type="ECO:0000255" key="1">
    <source>
        <dbReference type="HAMAP-Rule" id="MF_01670"/>
    </source>
</evidence>
<accession>Q5WKZ1</accession>
<gene>
    <name evidence="1" type="primary">iolA1</name>
    <name type="ordered locus">ABC0422</name>
</gene>
<protein>
    <recommendedName>
        <fullName evidence="1">Malonate-semialdehyde dehydrogenase 1</fullName>
        <shortName evidence="1">MSA dehydrogenase 1</shortName>
        <ecNumber evidence="1">1.2.1.27</ecNumber>
    </recommendedName>
    <alternativeName>
        <fullName evidence="1">Methylmalonate-semialdehyde dehydrogenase 1</fullName>
        <shortName evidence="1">MMSA dehydrogenase 1</shortName>
        <shortName evidence="1">MSDH 1</shortName>
    </alternativeName>
</protein>
<feature type="chain" id="PRO_0000352326" description="Malonate-semialdehyde dehydrogenase 1">
    <location>
        <begin position="1"/>
        <end position="491"/>
    </location>
</feature>
<feature type="active site" description="Nucleophile" evidence="1">
    <location>
        <position position="288"/>
    </location>
</feature>
<feature type="binding site" evidence="1">
    <location>
        <position position="154"/>
    </location>
    <ligand>
        <name>NAD(+)</name>
        <dbReference type="ChEBI" id="CHEBI:57540"/>
    </ligand>
</feature>
<feature type="binding site" evidence="1">
    <location>
        <position position="156"/>
    </location>
    <ligand>
        <name>NAD(+)</name>
        <dbReference type="ChEBI" id="CHEBI:57540"/>
    </ligand>
</feature>
<feature type="binding site" evidence="1">
    <location>
        <position position="180"/>
    </location>
    <ligand>
        <name>NAD(+)</name>
        <dbReference type="ChEBI" id="CHEBI:57540"/>
    </ligand>
</feature>
<feature type="binding site" evidence="1">
    <location>
        <position position="183"/>
    </location>
    <ligand>
        <name>NAD(+)</name>
        <dbReference type="ChEBI" id="CHEBI:57540"/>
    </ligand>
</feature>
<feature type="binding site" evidence="1">
    <location>
        <position position="184"/>
    </location>
    <ligand>
        <name>NAD(+)</name>
        <dbReference type="ChEBI" id="CHEBI:57540"/>
    </ligand>
</feature>
<feature type="binding site" evidence="1">
    <location>
        <position position="233"/>
    </location>
    <ligand>
        <name>NAD(+)</name>
        <dbReference type="ChEBI" id="CHEBI:57540"/>
    </ligand>
</feature>
<feature type="binding site" evidence="1">
    <location>
        <position position="255"/>
    </location>
    <ligand>
        <name>NAD(+)</name>
        <dbReference type="ChEBI" id="CHEBI:57540"/>
    </ligand>
</feature>
<feature type="binding site" evidence="1">
    <location>
        <position position="386"/>
    </location>
    <ligand>
        <name>NAD(+)</name>
        <dbReference type="ChEBI" id="CHEBI:57540"/>
    </ligand>
</feature>
<organism>
    <name type="scientific">Shouchella clausii (strain KSM-K16)</name>
    <name type="common">Alkalihalobacillus clausii</name>
    <dbReference type="NCBI Taxonomy" id="66692"/>
    <lineage>
        <taxon>Bacteria</taxon>
        <taxon>Bacillati</taxon>
        <taxon>Bacillota</taxon>
        <taxon>Bacilli</taxon>
        <taxon>Bacillales</taxon>
        <taxon>Bacillaceae</taxon>
        <taxon>Shouchella</taxon>
    </lineage>
</organism>
<proteinExistence type="inferred from homology"/>
<keyword id="KW-0520">NAD</keyword>
<keyword id="KW-0560">Oxidoreductase</keyword>
<keyword id="KW-1185">Reference proteome</keyword>
<comment type="function">
    <text evidence="1">Catalyzes the oxidation of malonate semialdehyde (MSA) and methylmalonate semialdehyde (MMSA) into acetyl-CoA and propanoyl-CoA, respectively. Is involved in a myo-inositol catabolic pathway. Bicarbonate, and not CO2, is the end-product of the enzymatic reaction.</text>
</comment>
<comment type="catalytic activity">
    <reaction evidence="1">
        <text>3-oxopropanoate + NAD(+) + CoA + H2O = hydrogencarbonate + acetyl-CoA + NADH + H(+)</text>
        <dbReference type="Rhea" id="RHEA:76615"/>
        <dbReference type="ChEBI" id="CHEBI:15377"/>
        <dbReference type="ChEBI" id="CHEBI:15378"/>
        <dbReference type="ChEBI" id="CHEBI:17544"/>
        <dbReference type="ChEBI" id="CHEBI:33190"/>
        <dbReference type="ChEBI" id="CHEBI:57287"/>
        <dbReference type="ChEBI" id="CHEBI:57288"/>
        <dbReference type="ChEBI" id="CHEBI:57540"/>
        <dbReference type="ChEBI" id="CHEBI:57945"/>
        <dbReference type="EC" id="1.2.1.27"/>
    </reaction>
    <physiologicalReaction direction="left-to-right" evidence="1">
        <dbReference type="Rhea" id="RHEA:76616"/>
    </physiologicalReaction>
</comment>
<comment type="catalytic activity">
    <reaction evidence="1">
        <text>2-methyl-3-oxopropanoate + NAD(+) + CoA + H2O = propanoyl-CoA + hydrogencarbonate + NADH + H(+)</text>
        <dbReference type="Rhea" id="RHEA:20804"/>
        <dbReference type="ChEBI" id="CHEBI:15377"/>
        <dbReference type="ChEBI" id="CHEBI:15378"/>
        <dbReference type="ChEBI" id="CHEBI:17544"/>
        <dbReference type="ChEBI" id="CHEBI:57287"/>
        <dbReference type="ChEBI" id="CHEBI:57392"/>
        <dbReference type="ChEBI" id="CHEBI:57540"/>
        <dbReference type="ChEBI" id="CHEBI:57700"/>
        <dbReference type="ChEBI" id="CHEBI:57945"/>
        <dbReference type="EC" id="1.2.1.27"/>
    </reaction>
    <physiologicalReaction direction="left-to-right" evidence="1">
        <dbReference type="Rhea" id="RHEA:20805"/>
    </physiologicalReaction>
</comment>
<comment type="pathway">
    <text evidence="1">Polyol metabolism; myo-inositol degradation into acetyl-CoA; acetyl-CoA from myo-inositol: step 7/7.</text>
</comment>
<comment type="subunit">
    <text evidence="1">Homotetramer.</text>
</comment>
<comment type="similarity">
    <text evidence="1">Belongs to the aldehyde dehydrogenase family. IolA subfamily.</text>
</comment>
<sequence>MGETTVEVRKVKNYINGKWIESSTSLYEDVVNPATKEVICQVPLSTKADVEYAVEAAKTAFAKWSKVAVPRRARILFNYQQLLQRDKEELARLITIENGKNLTEARGEVQRGIENVEFAAGAPSLMMGDSLPMIATDVEASNYRYPIGVVGGIAPFNFPMMVPCWMFPMAIALGNAFLLKPSERTPLLTEKLADLLTEAGVPDGVFNVVYGAHDVVNGMLEHPDIKAISFVGSKPVGEYVYKKASENLKRVQALTGAKNHTIVLNDADLDDAVTNIAGAAFGSAGERCMACAVVTVEEGIADAFVAKLKAKAESLVMGNGLDDGVFLGPVIREENKNRTIAYIEKGVEEGATLVCDGRSRVSADGYFIGPTIFENVTTDMTIWKDEIFAPVLSIIRVKNLDEGIQIANRSEFANGACLFTTNAAAVRYFRENIDAGMLGINLGVPAPMAFFPFSGWKSSFYGTLHANGKDSVDFYTRKKVVTARYPKPSFD</sequence>
<reference key="1">
    <citation type="submission" date="2003-10" db="EMBL/GenBank/DDBJ databases">
        <title>The complete genome sequence of the alkaliphilic Bacillus clausii KSM-K16.</title>
        <authorList>
            <person name="Takaki Y."/>
            <person name="Kageyama Y."/>
            <person name="Shimamura S."/>
            <person name="Suzuki H."/>
            <person name="Nishi S."/>
            <person name="Hatada Y."/>
            <person name="Kawai S."/>
            <person name="Ito S."/>
            <person name="Horikoshi K."/>
        </authorList>
    </citation>
    <scope>NUCLEOTIDE SEQUENCE [LARGE SCALE GENOMIC DNA]</scope>
    <source>
        <strain>KSM-K16</strain>
    </source>
</reference>